<proteinExistence type="inferred from homology"/>
<organism>
    <name type="scientific">Rhodopseudomonas palustris (strain HaA2)</name>
    <dbReference type="NCBI Taxonomy" id="316058"/>
    <lineage>
        <taxon>Bacteria</taxon>
        <taxon>Pseudomonadati</taxon>
        <taxon>Pseudomonadota</taxon>
        <taxon>Alphaproteobacteria</taxon>
        <taxon>Hyphomicrobiales</taxon>
        <taxon>Nitrobacteraceae</taxon>
        <taxon>Rhodopseudomonas</taxon>
    </lineage>
</organism>
<accession>Q2J3I2</accession>
<name>ATPA_RHOP2</name>
<keyword id="KW-0066">ATP synthesis</keyword>
<keyword id="KW-0067">ATP-binding</keyword>
<keyword id="KW-0997">Cell inner membrane</keyword>
<keyword id="KW-1003">Cell membrane</keyword>
<keyword id="KW-0139">CF(1)</keyword>
<keyword id="KW-0375">Hydrogen ion transport</keyword>
<keyword id="KW-0406">Ion transport</keyword>
<keyword id="KW-0472">Membrane</keyword>
<keyword id="KW-0547">Nucleotide-binding</keyword>
<keyword id="KW-1185">Reference proteome</keyword>
<keyword id="KW-1278">Translocase</keyword>
<keyword id="KW-0813">Transport</keyword>
<sequence>MDIRAAEISAILKDQIKNFGQEAEVTEVGQVLSVGDGIARVYGLDNVQAGEMVEFENGTRGMALNLETDNVGVVIFGADREIKEGQTVKRTRSIVDTPVGKGLLGRVVDALGNPIDGKGPIQATERKRVDVKAPGIIPRKSVNEPMATGLKAIDALIPVGRGQRELIIGDRQTGKTAIALDTILNQKPLNVEGAPEGQKLYCVYVAVGQKRSTVAQFVKVLEEQGALEYSIVVAATASDPAPMQYIAPFTGCTMGEYFRDNGMHAVIIYDDLSKQAVAYRQMSLLLRRPPGREAYPGDVFYLHSRLLERAAKLNDDHGAGSLTALPVIETQANDVSAYIPTNVISITDGQIFLETDLFFQGIRPAVNVGLSVSRVGSSAQTKAMKKVAGKIKGELAQYREMAAFAQFGSDLDASTQRLLNRGARLTELLKQPQFSPLKMEEQVVVIYAGVNGYLDALPVAKVRAFEDGLLSLLRGKEVGILDAIRTSRDLSDDTAAKLKAVVESYAKTFA</sequence>
<comment type="function">
    <text evidence="2">Produces ATP from ADP in the presence of a proton gradient across the membrane. The alpha chain is a regulatory subunit.</text>
</comment>
<comment type="catalytic activity">
    <reaction evidence="2">
        <text>ATP + H2O + 4 H(+)(in) = ADP + phosphate + 5 H(+)(out)</text>
        <dbReference type="Rhea" id="RHEA:57720"/>
        <dbReference type="ChEBI" id="CHEBI:15377"/>
        <dbReference type="ChEBI" id="CHEBI:15378"/>
        <dbReference type="ChEBI" id="CHEBI:30616"/>
        <dbReference type="ChEBI" id="CHEBI:43474"/>
        <dbReference type="ChEBI" id="CHEBI:456216"/>
        <dbReference type="EC" id="7.1.2.2"/>
    </reaction>
</comment>
<comment type="subunit">
    <text evidence="1">F-type ATPases have 2 components, CF(1) - the catalytic core - and CF(0) - the membrane proton channel. CF(1) has five subunits: alpha(3), beta(3), gamma(1), delta(1), epsilon(1). CF(0) has four main subunits: a(1), b(1), b'(1) and c(9-12) (By similarity).</text>
</comment>
<comment type="subcellular location">
    <subcellularLocation>
        <location evidence="2">Cell inner membrane</location>
        <topology evidence="2">Peripheral membrane protein</topology>
    </subcellularLocation>
</comment>
<comment type="similarity">
    <text evidence="2">Belongs to the ATPase alpha/beta chains family.</text>
</comment>
<reference key="1">
    <citation type="submission" date="2006-01" db="EMBL/GenBank/DDBJ databases">
        <title>Complete sequence of Rhodopseudomonas palustris HaA2.</title>
        <authorList>
            <consortium name="US DOE Joint Genome Institute"/>
            <person name="Copeland A."/>
            <person name="Lucas S."/>
            <person name="Lapidus A."/>
            <person name="Barry K."/>
            <person name="Detter J.C."/>
            <person name="Glavina T."/>
            <person name="Hammon N."/>
            <person name="Israni S."/>
            <person name="Pitluck S."/>
            <person name="Chain P."/>
            <person name="Malfatti S."/>
            <person name="Shin M."/>
            <person name="Vergez L."/>
            <person name="Schmutz J."/>
            <person name="Larimer F."/>
            <person name="Land M."/>
            <person name="Hauser L."/>
            <person name="Pelletier D.A."/>
            <person name="Kyrpides N."/>
            <person name="Anderson I."/>
            <person name="Oda Y."/>
            <person name="Harwood C.S."/>
            <person name="Richardson P."/>
        </authorList>
    </citation>
    <scope>NUCLEOTIDE SEQUENCE [LARGE SCALE GENOMIC DNA]</scope>
    <source>
        <strain>HaA2</strain>
    </source>
</reference>
<feature type="chain" id="PRO_0000256108" description="ATP synthase subunit alpha">
    <location>
        <begin position="1"/>
        <end position="510"/>
    </location>
</feature>
<feature type="binding site" evidence="2">
    <location>
        <begin position="169"/>
        <end position="176"/>
    </location>
    <ligand>
        <name>ATP</name>
        <dbReference type="ChEBI" id="CHEBI:30616"/>
    </ligand>
</feature>
<feature type="site" description="Required for activity" evidence="2">
    <location>
        <position position="371"/>
    </location>
</feature>
<dbReference type="EC" id="7.1.2.2" evidence="2"/>
<dbReference type="EMBL" id="CP000250">
    <property type="protein sequence ID" value="ABD04978.1"/>
    <property type="molecule type" value="Genomic_DNA"/>
</dbReference>
<dbReference type="RefSeq" id="WP_011439168.1">
    <property type="nucleotide sequence ID" value="NC_007778.1"/>
</dbReference>
<dbReference type="SMR" id="Q2J3I2"/>
<dbReference type="STRING" id="316058.RPB_0267"/>
<dbReference type="KEGG" id="rpb:RPB_0267"/>
<dbReference type="eggNOG" id="COG0056">
    <property type="taxonomic scope" value="Bacteria"/>
</dbReference>
<dbReference type="HOGENOM" id="CLU_010091_2_1_5"/>
<dbReference type="OrthoDB" id="9803053at2"/>
<dbReference type="Proteomes" id="UP000008809">
    <property type="component" value="Chromosome"/>
</dbReference>
<dbReference type="GO" id="GO:0005886">
    <property type="term" value="C:plasma membrane"/>
    <property type="evidence" value="ECO:0007669"/>
    <property type="project" value="UniProtKB-SubCell"/>
</dbReference>
<dbReference type="GO" id="GO:0045259">
    <property type="term" value="C:proton-transporting ATP synthase complex"/>
    <property type="evidence" value="ECO:0007669"/>
    <property type="project" value="UniProtKB-KW"/>
</dbReference>
<dbReference type="GO" id="GO:0043531">
    <property type="term" value="F:ADP binding"/>
    <property type="evidence" value="ECO:0007669"/>
    <property type="project" value="TreeGrafter"/>
</dbReference>
<dbReference type="GO" id="GO:0005524">
    <property type="term" value="F:ATP binding"/>
    <property type="evidence" value="ECO:0007669"/>
    <property type="project" value="UniProtKB-UniRule"/>
</dbReference>
<dbReference type="GO" id="GO:0046933">
    <property type="term" value="F:proton-transporting ATP synthase activity, rotational mechanism"/>
    <property type="evidence" value="ECO:0007669"/>
    <property type="project" value="UniProtKB-UniRule"/>
</dbReference>
<dbReference type="CDD" id="cd18113">
    <property type="entry name" value="ATP-synt_F1_alpha_C"/>
    <property type="match status" value="1"/>
</dbReference>
<dbReference type="CDD" id="cd18116">
    <property type="entry name" value="ATP-synt_F1_alpha_N"/>
    <property type="match status" value="1"/>
</dbReference>
<dbReference type="CDD" id="cd01132">
    <property type="entry name" value="F1-ATPase_alpha_CD"/>
    <property type="match status" value="1"/>
</dbReference>
<dbReference type="FunFam" id="1.20.150.20:FF:000001">
    <property type="entry name" value="ATP synthase subunit alpha"/>
    <property type="match status" value="1"/>
</dbReference>
<dbReference type="FunFam" id="2.40.30.20:FF:000001">
    <property type="entry name" value="ATP synthase subunit alpha"/>
    <property type="match status" value="1"/>
</dbReference>
<dbReference type="FunFam" id="3.40.50.300:FF:002432">
    <property type="entry name" value="ATP synthase subunit alpha, mitochondrial"/>
    <property type="match status" value="1"/>
</dbReference>
<dbReference type="Gene3D" id="2.40.30.20">
    <property type="match status" value="1"/>
</dbReference>
<dbReference type="Gene3D" id="1.20.150.20">
    <property type="entry name" value="ATP synthase alpha/beta chain, C-terminal domain"/>
    <property type="match status" value="1"/>
</dbReference>
<dbReference type="Gene3D" id="3.40.50.300">
    <property type="entry name" value="P-loop containing nucleotide triphosphate hydrolases"/>
    <property type="match status" value="1"/>
</dbReference>
<dbReference type="HAMAP" id="MF_01346">
    <property type="entry name" value="ATP_synth_alpha_bact"/>
    <property type="match status" value="1"/>
</dbReference>
<dbReference type="InterPro" id="IPR023366">
    <property type="entry name" value="ATP_synth_asu-like_sf"/>
</dbReference>
<dbReference type="InterPro" id="IPR000793">
    <property type="entry name" value="ATP_synth_asu_C"/>
</dbReference>
<dbReference type="InterPro" id="IPR038376">
    <property type="entry name" value="ATP_synth_asu_C_sf"/>
</dbReference>
<dbReference type="InterPro" id="IPR033732">
    <property type="entry name" value="ATP_synth_F1_a_nt-bd_dom"/>
</dbReference>
<dbReference type="InterPro" id="IPR005294">
    <property type="entry name" value="ATP_synth_F1_asu"/>
</dbReference>
<dbReference type="InterPro" id="IPR020003">
    <property type="entry name" value="ATPase_a/bsu_AS"/>
</dbReference>
<dbReference type="InterPro" id="IPR004100">
    <property type="entry name" value="ATPase_F1/V1/A1_a/bsu_N"/>
</dbReference>
<dbReference type="InterPro" id="IPR036121">
    <property type="entry name" value="ATPase_F1/V1/A1_a/bsu_N_sf"/>
</dbReference>
<dbReference type="InterPro" id="IPR000194">
    <property type="entry name" value="ATPase_F1/V1/A1_a/bsu_nucl-bd"/>
</dbReference>
<dbReference type="InterPro" id="IPR027417">
    <property type="entry name" value="P-loop_NTPase"/>
</dbReference>
<dbReference type="NCBIfam" id="TIGR00962">
    <property type="entry name" value="atpA"/>
    <property type="match status" value="1"/>
</dbReference>
<dbReference type="NCBIfam" id="NF009884">
    <property type="entry name" value="PRK13343.1"/>
    <property type="match status" value="1"/>
</dbReference>
<dbReference type="PANTHER" id="PTHR48082">
    <property type="entry name" value="ATP SYNTHASE SUBUNIT ALPHA, MITOCHONDRIAL"/>
    <property type="match status" value="1"/>
</dbReference>
<dbReference type="PANTHER" id="PTHR48082:SF2">
    <property type="entry name" value="ATP SYNTHASE SUBUNIT ALPHA, MITOCHONDRIAL"/>
    <property type="match status" value="1"/>
</dbReference>
<dbReference type="Pfam" id="PF00006">
    <property type="entry name" value="ATP-synt_ab"/>
    <property type="match status" value="1"/>
</dbReference>
<dbReference type="Pfam" id="PF00306">
    <property type="entry name" value="ATP-synt_ab_C"/>
    <property type="match status" value="1"/>
</dbReference>
<dbReference type="Pfam" id="PF02874">
    <property type="entry name" value="ATP-synt_ab_N"/>
    <property type="match status" value="1"/>
</dbReference>
<dbReference type="PIRSF" id="PIRSF039088">
    <property type="entry name" value="F_ATPase_subunit_alpha"/>
    <property type="match status" value="1"/>
</dbReference>
<dbReference type="SUPFAM" id="SSF47917">
    <property type="entry name" value="C-terminal domain of alpha and beta subunits of F1 ATP synthase"/>
    <property type="match status" value="1"/>
</dbReference>
<dbReference type="SUPFAM" id="SSF50615">
    <property type="entry name" value="N-terminal domain of alpha and beta subunits of F1 ATP synthase"/>
    <property type="match status" value="1"/>
</dbReference>
<dbReference type="SUPFAM" id="SSF52540">
    <property type="entry name" value="P-loop containing nucleoside triphosphate hydrolases"/>
    <property type="match status" value="1"/>
</dbReference>
<dbReference type="PROSITE" id="PS00152">
    <property type="entry name" value="ATPASE_ALPHA_BETA"/>
    <property type="match status" value="1"/>
</dbReference>
<gene>
    <name evidence="2" type="primary">atpA</name>
    <name type="ordered locus">RPB_0267</name>
</gene>
<protein>
    <recommendedName>
        <fullName evidence="2">ATP synthase subunit alpha</fullName>
        <ecNumber evidence="2">7.1.2.2</ecNumber>
    </recommendedName>
    <alternativeName>
        <fullName evidence="2">ATP synthase F1 sector subunit alpha</fullName>
    </alternativeName>
    <alternativeName>
        <fullName evidence="2">F-ATPase subunit alpha</fullName>
    </alternativeName>
</protein>
<evidence type="ECO:0000250" key="1"/>
<evidence type="ECO:0000255" key="2">
    <source>
        <dbReference type="HAMAP-Rule" id="MF_01346"/>
    </source>
</evidence>